<name>RL16_STRP3</name>
<sequence>MLVPKRVKHRREFRGKMRGEAKGGKEVSFGEYGLQATTSHWITNRQIEAARIAMTRYMKRGGKVWIKIFPHKSYTAKAIGVRMGSGKGAPEGWVAPVKRGKVMFEIAGVSEEIAREALRLASHKLPVKCKFVKREAE</sequence>
<feature type="chain" id="PRO_0000062222" description="Large ribosomal subunit protein uL16">
    <location>
        <begin position="1"/>
        <end position="137"/>
    </location>
</feature>
<accession>P0DE08</accession>
<accession>Q79YR7</accession>
<accession>Q7CFL2</accession>
<evidence type="ECO:0000255" key="1">
    <source>
        <dbReference type="HAMAP-Rule" id="MF_01342"/>
    </source>
</evidence>
<evidence type="ECO:0000305" key="2"/>
<dbReference type="EMBL" id="AE014074">
    <property type="protein sequence ID" value="AAM78654.1"/>
    <property type="molecule type" value="Genomic_DNA"/>
</dbReference>
<dbReference type="RefSeq" id="WP_002986644.1">
    <property type="nucleotide sequence ID" value="NC_004070.1"/>
</dbReference>
<dbReference type="SMR" id="P0DE08"/>
<dbReference type="GeneID" id="69900033"/>
<dbReference type="KEGG" id="spg:SpyM3_0047"/>
<dbReference type="HOGENOM" id="CLU_078858_2_1_9"/>
<dbReference type="Proteomes" id="UP000000564">
    <property type="component" value="Chromosome"/>
</dbReference>
<dbReference type="GO" id="GO:0022625">
    <property type="term" value="C:cytosolic large ribosomal subunit"/>
    <property type="evidence" value="ECO:0007669"/>
    <property type="project" value="TreeGrafter"/>
</dbReference>
<dbReference type="GO" id="GO:0019843">
    <property type="term" value="F:rRNA binding"/>
    <property type="evidence" value="ECO:0007669"/>
    <property type="project" value="UniProtKB-UniRule"/>
</dbReference>
<dbReference type="GO" id="GO:0003735">
    <property type="term" value="F:structural constituent of ribosome"/>
    <property type="evidence" value="ECO:0007669"/>
    <property type="project" value="InterPro"/>
</dbReference>
<dbReference type="GO" id="GO:0000049">
    <property type="term" value="F:tRNA binding"/>
    <property type="evidence" value="ECO:0007669"/>
    <property type="project" value="UniProtKB-KW"/>
</dbReference>
<dbReference type="GO" id="GO:0006412">
    <property type="term" value="P:translation"/>
    <property type="evidence" value="ECO:0007669"/>
    <property type="project" value="UniProtKB-UniRule"/>
</dbReference>
<dbReference type="CDD" id="cd01433">
    <property type="entry name" value="Ribosomal_L16_L10e"/>
    <property type="match status" value="1"/>
</dbReference>
<dbReference type="FunFam" id="3.90.1170.10:FF:000001">
    <property type="entry name" value="50S ribosomal protein L16"/>
    <property type="match status" value="1"/>
</dbReference>
<dbReference type="Gene3D" id="3.90.1170.10">
    <property type="entry name" value="Ribosomal protein L10e/L16"/>
    <property type="match status" value="1"/>
</dbReference>
<dbReference type="HAMAP" id="MF_01342">
    <property type="entry name" value="Ribosomal_uL16"/>
    <property type="match status" value="1"/>
</dbReference>
<dbReference type="InterPro" id="IPR047873">
    <property type="entry name" value="Ribosomal_uL16"/>
</dbReference>
<dbReference type="InterPro" id="IPR000114">
    <property type="entry name" value="Ribosomal_uL16_bact-type"/>
</dbReference>
<dbReference type="InterPro" id="IPR020798">
    <property type="entry name" value="Ribosomal_uL16_CS"/>
</dbReference>
<dbReference type="InterPro" id="IPR016180">
    <property type="entry name" value="Ribosomal_uL16_dom"/>
</dbReference>
<dbReference type="InterPro" id="IPR036920">
    <property type="entry name" value="Ribosomal_uL16_sf"/>
</dbReference>
<dbReference type="NCBIfam" id="TIGR01164">
    <property type="entry name" value="rplP_bact"/>
    <property type="match status" value="1"/>
</dbReference>
<dbReference type="PANTHER" id="PTHR12220">
    <property type="entry name" value="50S/60S RIBOSOMAL PROTEIN L16"/>
    <property type="match status" value="1"/>
</dbReference>
<dbReference type="PANTHER" id="PTHR12220:SF13">
    <property type="entry name" value="LARGE RIBOSOMAL SUBUNIT PROTEIN UL16M"/>
    <property type="match status" value="1"/>
</dbReference>
<dbReference type="Pfam" id="PF00252">
    <property type="entry name" value="Ribosomal_L16"/>
    <property type="match status" value="1"/>
</dbReference>
<dbReference type="PRINTS" id="PR00060">
    <property type="entry name" value="RIBOSOMALL16"/>
</dbReference>
<dbReference type="SUPFAM" id="SSF54686">
    <property type="entry name" value="Ribosomal protein L16p/L10e"/>
    <property type="match status" value="1"/>
</dbReference>
<dbReference type="PROSITE" id="PS00586">
    <property type="entry name" value="RIBOSOMAL_L16_1"/>
    <property type="match status" value="1"/>
</dbReference>
<dbReference type="PROSITE" id="PS00701">
    <property type="entry name" value="RIBOSOMAL_L16_2"/>
    <property type="match status" value="1"/>
</dbReference>
<organism>
    <name type="scientific">Streptococcus pyogenes serotype M3 (strain ATCC BAA-595 / MGAS315)</name>
    <dbReference type="NCBI Taxonomy" id="198466"/>
    <lineage>
        <taxon>Bacteria</taxon>
        <taxon>Bacillati</taxon>
        <taxon>Bacillota</taxon>
        <taxon>Bacilli</taxon>
        <taxon>Lactobacillales</taxon>
        <taxon>Streptococcaceae</taxon>
        <taxon>Streptococcus</taxon>
    </lineage>
</organism>
<keyword id="KW-0687">Ribonucleoprotein</keyword>
<keyword id="KW-0689">Ribosomal protein</keyword>
<keyword id="KW-0694">RNA-binding</keyword>
<keyword id="KW-0699">rRNA-binding</keyword>
<keyword id="KW-0820">tRNA-binding</keyword>
<proteinExistence type="inferred from homology"/>
<gene>
    <name evidence="1" type="primary">rplP</name>
    <name type="ordered locus">SpyM3_0047</name>
</gene>
<protein>
    <recommendedName>
        <fullName evidence="1">Large ribosomal subunit protein uL16</fullName>
    </recommendedName>
    <alternativeName>
        <fullName evidence="2">50S ribosomal protein L16</fullName>
    </alternativeName>
</protein>
<reference key="1">
    <citation type="journal article" date="2002" name="Proc. Natl. Acad. Sci. U.S.A.">
        <title>Genome sequence of a serotype M3 strain of group A Streptococcus: phage-encoded toxins, the high-virulence phenotype, and clone emergence.</title>
        <authorList>
            <person name="Beres S.B."/>
            <person name="Sylva G.L."/>
            <person name="Barbian K.D."/>
            <person name="Lei B."/>
            <person name="Hoff J.S."/>
            <person name="Mammarella N.D."/>
            <person name="Liu M.-Y."/>
            <person name="Smoot J.C."/>
            <person name="Porcella S.F."/>
            <person name="Parkins L.D."/>
            <person name="Campbell D.S."/>
            <person name="Smith T.M."/>
            <person name="McCormick J.K."/>
            <person name="Leung D.Y.M."/>
            <person name="Schlievert P.M."/>
            <person name="Musser J.M."/>
        </authorList>
    </citation>
    <scope>NUCLEOTIDE SEQUENCE [LARGE SCALE GENOMIC DNA]</scope>
    <source>
        <strain>ATCC BAA-595 / MGAS315</strain>
    </source>
</reference>
<comment type="function">
    <text evidence="1">Binds 23S rRNA and is also seen to make contacts with the A and possibly P site tRNAs.</text>
</comment>
<comment type="subunit">
    <text evidence="1">Part of the 50S ribosomal subunit.</text>
</comment>
<comment type="similarity">
    <text evidence="1">Belongs to the universal ribosomal protein uL16 family.</text>
</comment>